<accession>Q9V677</accession>
<accession>Q7K1A6</accession>
<organism>
    <name type="scientific">Drosophila melanogaster</name>
    <name type="common">Fruit fly</name>
    <dbReference type="NCBI Taxonomy" id="7227"/>
    <lineage>
        <taxon>Eukaryota</taxon>
        <taxon>Metazoa</taxon>
        <taxon>Ecdysozoa</taxon>
        <taxon>Arthropoda</taxon>
        <taxon>Hexapoda</taxon>
        <taxon>Insecta</taxon>
        <taxon>Pterygota</taxon>
        <taxon>Neoptera</taxon>
        <taxon>Endopterygota</taxon>
        <taxon>Diptera</taxon>
        <taxon>Brachycera</taxon>
        <taxon>Muscomorpha</taxon>
        <taxon>Ephydroidea</taxon>
        <taxon>Drosophilidae</taxon>
        <taxon>Drosophila</taxon>
        <taxon>Sophophora</taxon>
    </lineage>
</organism>
<feature type="chain" id="PRO_0000212562" description="Proteasome-associated protein ECM29 homolog">
    <location>
        <begin position="1"/>
        <end position="1890"/>
    </location>
</feature>
<feature type="repeat" description="HEAT 1">
    <location>
        <begin position="6"/>
        <end position="29"/>
    </location>
</feature>
<feature type="repeat" description="HEAT 2">
    <location>
        <begin position="30"/>
        <end position="67"/>
    </location>
</feature>
<feature type="repeat" description="HEAT 3">
    <location>
        <begin position="130"/>
        <end position="167"/>
    </location>
</feature>
<feature type="repeat" description="HEAT 4">
    <location>
        <begin position="226"/>
        <end position="263"/>
    </location>
</feature>
<feature type="repeat" description="HEAT 5">
    <location>
        <begin position="294"/>
        <end position="330"/>
    </location>
</feature>
<feature type="repeat" description="HEAT 6">
    <location>
        <begin position="334"/>
        <end position="354"/>
    </location>
</feature>
<feature type="repeat" description="HEAT 7">
    <location>
        <begin position="355"/>
        <end position="395"/>
    </location>
</feature>
<feature type="repeat" description="HEAT 8">
    <location>
        <begin position="459"/>
        <end position="496"/>
    </location>
</feature>
<feature type="repeat" description="HEAT 9">
    <location>
        <begin position="498"/>
        <end position="523"/>
    </location>
</feature>
<feature type="repeat" description="HEAT 10">
    <location>
        <begin position="524"/>
        <end position="561"/>
    </location>
</feature>
<feature type="repeat" description="HEAT 11">
    <location>
        <begin position="565"/>
        <end position="602"/>
    </location>
</feature>
<feature type="repeat" description="HEAT 12">
    <location>
        <begin position="685"/>
        <end position="722"/>
    </location>
</feature>
<feature type="repeat" description="HEAT 13">
    <location>
        <begin position="776"/>
        <end position="813"/>
    </location>
</feature>
<feature type="repeat" description="HEAT 14">
    <location>
        <begin position="843"/>
        <end position="882"/>
    </location>
</feature>
<feature type="repeat" description="HEAT 15">
    <location>
        <begin position="938"/>
        <end position="975"/>
    </location>
</feature>
<feature type="repeat" description="HEAT 16">
    <location>
        <begin position="980"/>
        <end position="1018"/>
    </location>
</feature>
<feature type="repeat" description="HEAT 17">
    <location>
        <begin position="1118"/>
        <end position="1155"/>
    </location>
</feature>
<feature type="repeat" description="HEAT 18">
    <location>
        <begin position="1159"/>
        <end position="1196"/>
    </location>
</feature>
<feature type="repeat" description="HEAT 19">
    <location>
        <begin position="1271"/>
        <end position="1309"/>
    </location>
</feature>
<feature type="repeat" description="HEAT 20">
    <location>
        <begin position="1313"/>
        <end position="1350"/>
    </location>
</feature>
<feature type="repeat" description="HEAT 21">
    <location>
        <begin position="1378"/>
        <end position="1415"/>
    </location>
</feature>
<feature type="repeat" description="HEAT 22">
    <location>
        <begin position="1416"/>
        <end position="1457"/>
    </location>
</feature>
<feature type="repeat" description="HEAT 23">
    <location>
        <begin position="1497"/>
        <end position="1534"/>
    </location>
</feature>
<feature type="repeat" description="HEAT 24">
    <location>
        <begin position="1541"/>
        <end position="1578"/>
    </location>
</feature>
<feature type="repeat" description="HEAT 25">
    <location>
        <begin position="1583"/>
        <end position="1620"/>
    </location>
</feature>
<feature type="repeat" description="HEAT 26">
    <location>
        <begin position="1623"/>
        <end position="1660"/>
    </location>
</feature>
<feature type="repeat" description="HEAT 27">
    <location>
        <begin position="1751"/>
        <end position="1788"/>
    </location>
</feature>
<feature type="repeat" description="HEAT 28">
    <location>
        <begin position="1826"/>
        <end position="1863"/>
    </location>
</feature>
<feature type="region of interest" description="Disordered" evidence="2">
    <location>
        <begin position="1680"/>
        <end position="1702"/>
    </location>
</feature>
<feature type="modified residue" description="Phosphoserine" evidence="3">
    <location>
        <position position="1213"/>
    </location>
</feature>
<feature type="modified residue" description="Phosphoserine" evidence="3 4">
    <location>
        <position position="1683"/>
    </location>
</feature>
<feature type="modified residue" description="Phosphothreonine" evidence="4">
    <location>
        <position position="1691"/>
    </location>
</feature>
<feature type="modified residue" description="Phosphoserine" evidence="4">
    <location>
        <position position="1692"/>
    </location>
</feature>
<sequence>METGPNAEIELLERVLLRLGNADSDEKLEAAVGKFLTPVILKMNSPHNVVRTKVVEVLTHIKRRLSSRGHVQIPVEALLDQYAAQDSSTFLKNFAIIFITMGFPRLALEQQTALASKVVGCEDKLESYQDKLFALLLPVLSDMKIPDDPTQRSKLLDLQDKPAICANFLALLQDVLLLPYGITQEQDVPPGLSPYSFTRIIAYNWRAEELEKVKKGIVRFLCASVFSDLQIFVPLVVASADTRFSVATPAITELSKLCTMLDFSNPAVTAPLYTLFAGNQSKITDRQTRPCCARVRQKLLQYLIKCRGKSINVTKGLQVTFDGFFGTNTNQKCKVLALQFMELLLRDGPRELVSKVSKVILTGITKIIGRDSNEPNDVQNAAYSALAQHARSFPQDVSQDLKLVLGYFNNLASCAPELHSSIREALVSMAPAFAWKTKEKSDAMEVDKNVDSSSVKLDGQQHLLLAMLLDNAESKVQIVQNVTSVFLTSCYPEYYAPARYLLLLIAGERNSLRENVTTYLYGTSKKDHINYSMLSSIDHSKNRISSESISDFNHLSLEQRRVMLPSFQVMMSHVHEMAEKRLKKNTACVVVGRTKLPYSLEVYEELLDYLRLCLWYSAGVVAAPGDEKYTHELREYITLHYEDTEDNALHQYAQFVQRSVEAKRSESNLICLYDLLNAAPELFAAKQLHLLEPLGNTLKDVSETMRINVAQVYGILWAFGLSDEKFDEEVGECLNSLTQKTLEHKHGWLLVVGHTFNRKIAMLKQENKTKDFAAWPQFVNAVKIISKCLCESQWLLVSAAVKCISMIGKAVEIPNVPVEIQVPSKDGDDDDEEMTEYTSIDSSTKLVIFGVVFQLLRSSSARQKIREDSARCLGYLAIGDGEHFTKRNLDKFLTLTKIQKDAALNIAISEAIVNTLCGYDVNKGQPDEKFVNKHCNDDDFDQFLNSLIRLVTDPNPHSRQAISVWLLAVVKHCSQRPAVLAKKELLQFAFTELLSDDSEFVQDVASRGLGLVYSISDSGSQSDLANSLLDQLIGGKRKVNQVTADTELFAEGMLGKTPTGGNITTYKELCSLASDLNQPDMIYQFMQLANHNATWTSKLGAAFGLKTLSAESRQKMEPYLGKIIPRLYRYKYDPTPKIQNSMISIWDTIVTDSKEVTERYYWEILRELLDNLTCKEWRVRIACCLAVRDLLNRPNGLKLRSEEPVRRALPDNSMEVDEVPEPELKELWFQLFRVMDDIHEGTRVAAHGTASFLGKLCVIASSSDHGKSGTAVASSILPFLLETGVGHKVPEIRRVSIKTISDMIDSSGSLIAPHLATLIPCLLRATGELENTKLSYVSTRLGADNEAQEAVDTLRAEAAKSLHTMETIGKCVRYIDYSVLEKMTPEVLELMKGSVNLGTKIGCAHFVCLISIRLGKEMTPLVGKYIRACFVGIKNRNATVRKYNASAIGHLLGLAKEQSIKSLFTKLEELYAEQPGNRSIALTIQSINKRHHELLKDYMDSMLPLIFFAMHEEPNEETKANVELWKDLWHDVSPGDAGIRLNLNVIIPKLESSLTDASWSRKAQAANAIQTIATRLSSSLDEPDRLRLIKLLLSGLQGRTFEGKERLLQALAALTKGLDRNHQICSSIIDAAMREARKREPVYRTMALASLGEILDQLEADRFEEVYNMSWNLLEKKELRKESDDEDEPNTSQELSADERNKRAQTLNRLKEVVWETLGKSWPRHSIETQHRYQLFFAENCTSILAESTRPVQVSLLAALTKYIERLHVFDESAQVPDLTQINQEKKIKTEETAPKTREAIVEKICTDVLAAVALAAGVPHSGLKKEALNIVLMLIKRLSGSGNGNQQPLRLIKQSFESNLEKFQRDSAPEIRCRIKDIEDKLSKLNPQN</sequence>
<comment type="subunit">
    <text evidence="1">Associated with the proteasome.</text>
</comment>
<comment type="subcellular location">
    <subcellularLocation>
        <location evidence="1">Cytoplasm</location>
    </subcellularLocation>
</comment>
<comment type="sequence caution" evidence="5">
    <conflict type="erroneous initiation">
        <sequence resource="EMBL-CDS" id="AAL39369"/>
    </conflict>
</comment>
<keyword id="KW-0963">Cytoplasm</keyword>
<keyword id="KW-0597">Phosphoprotein</keyword>
<keyword id="KW-0647">Proteasome</keyword>
<keyword id="KW-1185">Reference proteome</keyword>
<keyword id="KW-0677">Repeat</keyword>
<gene>
    <name type="ORF">CG8858</name>
</gene>
<dbReference type="EMBL" id="AE013599">
    <property type="protein sequence ID" value="AAF58554.1"/>
    <property type="molecule type" value="Genomic_DNA"/>
</dbReference>
<dbReference type="EMBL" id="AY069224">
    <property type="protein sequence ID" value="AAL39369.2"/>
    <property type="status" value="ALT_INIT"/>
    <property type="molecule type" value="mRNA"/>
</dbReference>
<dbReference type="RefSeq" id="NP_610746.1">
    <property type="nucleotide sequence ID" value="NM_136902.3"/>
</dbReference>
<dbReference type="BioGRID" id="62097">
    <property type="interactions" value="1"/>
</dbReference>
<dbReference type="FunCoup" id="Q9V677">
    <property type="interactions" value="2154"/>
</dbReference>
<dbReference type="IntAct" id="Q9V677">
    <property type="interactions" value="2"/>
</dbReference>
<dbReference type="STRING" id="7227.FBpp0087116"/>
<dbReference type="iPTMnet" id="Q9V677"/>
<dbReference type="PaxDb" id="7227-FBpp0087116"/>
<dbReference type="DNASU" id="36319"/>
<dbReference type="EnsemblMetazoa" id="FBtr0088008">
    <property type="protein sequence ID" value="FBpp0087116"/>
    <property type="gene ID" value="FBgn0033698"/>
</dbReference>
<dbReference type="GeneID" id="36319"/>
<dbReference type="KEGG" id="dme:Dmel_CG8858"/>
<dbReference type="UCSC" id="CG8858-RA">
    <property type="organism name" value="d. melanogaster"/>
</dbReference>
<dbReference type="AGR" id="FB:FBgn0033698"/>
<dbReference type="FlyBase" id="FBgn0033698">
    <property type="gene designation" value="CG8858"/>
</dbReference>
<dbReference type="VEuPathDB" id="VectorBase:FBgn0033698"/>
<dbReference type="eggNOG" id="KOG0915">
    <property type="taxonomic scope" value="Eukaryota"/>
</dbReference>
<dbReference type="GeneTree" id="ENSGT00940000153612"/>
<dbReference type="HOGENOM" id="CLU_000880_2_1_1"/>
<dbReference type="InParanoid" id="Q9V677"/>
<dbReference type="OMA" id="CRIKDIE"/>
<dbReference type="OrthoDB" id="16066at2759"/>
<dbReference type="PhylomeDB" id="Q9V677"/>
<dbReference type="BioGRID-ORCS" id="36319">
    <property type="hits" value="0 hits in 1 CRISPR screen"/>
</dbReference>
<dbReference type="GenomeRNAi" id="36319"/>
<dbReference type="PRO" id="PR:Q9V677"/>
<dbReference type="Proteomes" id="UP000000803">
    <property type="component" value="Chromosome 2R"/>
</dbReference>
<dbReference type="Bgee" id="FBgn0033698">
    <property type="expression patterns" value="Expressed in eye disc (Drosophila) and 76 other cell types or tissues"/>
</dbReference>
<dbReference type="GO" id="GO:0005737">
    <property type="term" value="C:cytoplasm"/>
    <property type="evidence" value="ECO:0000318"/>
    <property type="project" value="GO_Central"/>
</dbReference>
<dbReference type="GO" id="GO:0005634">
    <property type="term" value="C:nucleus"/>
    <property type="evidence" value="ECO:0000250"/>
    <property type="project" value="UniProtKB"/>
</dbReference>
<dbReference type="GO" id="GO:0000502">
    <property type="term" value="C:proteasome complex"/>
    <property type="evidence" value="ECO:0000250"/>
    <property type="project" value="UniProtKB"/>
</dbReference>
<dbReference type="GO" id="GO:0060090">
    <property type="term" value="F:molecular adaptor activity"/>
    <property type="evidence" value="ECO:0000318"/>
    <property type="project" value="GO_Central"/>
</dbReference>
<dbReference type="GO" id="GO:0036503">
    <property type="term" value="P:ERAD pathway"/>
    <property type="evidence" value="ECO:0000318"/>
    <property type="project" value="GO_Central"/>
</dbReference>
<dbReference type="GO" id="GO:0043248">
    <property type="term" value="P:proteasome assembly"/>
    <property type="evidence" value="ECO:0007669"/>
    <property type="project" value="InterPro"/>
</dbReference>
<dbReference type="FunFam" id="1.25.10.10:FF:001905">
    <property type="entry name" value="Proteasome-associated protein ECM29 homolog"/>
    <property type="match status" value="1"/>
</dbReference>
<dbReference type="Gene3D" id="1.25.10.10">
    <property type="entry name" value="Leucine-rich Repeat Variant"/>
    <property type="match status" value="3"/>
</dbReference>
<dbReference type="InterPro" id="IPR011989">
    <property type="entry name" value="ARM-like"/>
</dbReference>
<dbReference type="InterPro" id="IPR016024">
    <property type="entry name" value="ARM-type_fold"/>
</dbReference>
<dbReference type="InterPro" id="IPR055444">
    <property type="entry name" value="ARM_ECM29"/>
</dbReference>
<dbReference type="InterPro" id="IPR024372">
    <property type="entry name" value="Ecm29_N"/>
</dbReference>
<dbReference type="InterPro" id="IPR055443">
    <property type="entry name" value="HEAT_ECM29"/>
</dbReference>
<dbReference type="PANTHER" id="PTHR23346:SF19">
    <property type="entry name" value="PROTEASOME ADAPTER AND SCAFFOLD PROTEIN ECM29"/>
    <property type="match status" value="1"/>
</dbReference>
<dbReference type="PANTHER" id="PTHR23346">
    <property type="entry name" value="TRANSLATIONAL ACTIVATOR GCN1-RELATED"/>
    <property type="match status" value="1"/>
</dbReference>
<dbReference type="Pfam" id="PF23702">
    <property type="entry name" value="ARM_ECM29"/>
    <property type="match status" value="1"/>
</dbReference>
<dbReference type="Pfam" id="PF23731">
    <property type="entry name" value="ARM_ECM29_C"/>
    <property type="match status" value="1"/>
</dbReference>
<dbReference type="Pfam" id="PF13001">
    <property type="entry name" value="ECM29_N"/>
    <property type="match status" value="1"/>
</dbReference>
<dbReference type="Pfam" id="PF24492">
    <property type="entry name" value="HEAT_ECM29"/>
    <property type="match status" value="1"/>
</dbReference>
<dbReference type="SUPFAM" id="SSF48371">
    <property type="entry name" value="ARM repeat"/>
    <property type="match status" value="3"/>
</dbReference>
<evidence type="ECO:0000250" key="1"/>
<evidence type="ECO:0000256" key="2">
    <source>
        <dbReference type="SAM" id="MobiDB-lite"/>
    </source>
</evidence>
<evidence type="ECO:0000269" key="3">
    <source>
    </source>
</evidence>
<evidence type="ECO:0000269" key="4">
    <source>
    </source>
</evidence>
<evidence type="ECO:0000305" key="5"/>
<proteinExistence type="evidence at protein level"/>
<protein>
    <recommendedName>
        <fullName>Proteasome-associated protein ECM29 homolog</fullName>
    </recommendedName>
</protein>
<reference key="1">
    <citation type="journal article" date="2000" name="Science">
        <title>The genome sequence of Drosophila melanogaster.</title>
        <authorList>
            <person name="Adams M.D."/>
            <person name="Celniker S.E."/>
            <person name="Holt R.A."/>
            <person name="Evans C.A."/>
            <person name="Gocayne J.D."/>
            <person name="Amanatides P.G."/>
            <person name="Scherer S.E."/>
            <person name="Li P.W."/>
            <person name="Hoskins R.A."/>
            <person name="Galle R.F."/>
            <person name="George R.A."/>
            <person name="Lewis S.E."/>
            <person name="Richards S."/>
            <person name="Ashburner M."/>
            <person name="Henderson S.N."/>
            <person name="Sutton G.G."/>
            <person name="Wortman J.R."/>
            <person name="Yandell M.D."/>
            <person name="Zhang Q."/>
            <person name="Chen L.X."/>
            <person name="Brandon R.C."/>
            <person name="Rogers Y.-H.C."/>
            <person name="Blazej R.G."/>
            <person name="Champe M."/>
            <person name="Pfeiffer B.D."/>
            <person name="Wan K.H."/>
            <person name="Doyle C."/>
            <person name="Baxter E.G."/>
            <person name="Helt G."/>
            <person name="Nelson C.R."/>
            <person name="Miklos G.L.G."/>
            <person name="Abril J.F."/>
            <person name="Agbayani A."/>
            <person name="An H.-J."/>
            <person name="Andrews-Pfannkoch C."/>
            <person name="Baldwin D."/>
            <person name="Ballew R.M."/>
            <person name="Basu A."/>
            <person name="Baxendale J."/>
            <person name="Bayraktaroglu L."/>
            <person name="Beasley E.M."/>
            <person name="Beeson K.Y."/>
            <person name="Benos P.V."/>
            <person name="Berman B.P."/>
            <person name="Bhandari D."/>
            <person name="Bolshakov S."/>
            <person name="Borkova D."/>
            <person name="Botchan M.R."/>
            <person name="Bouck J."/>
            <person name="Brokstein P."/>
            <person name="Brottier P."/>
            <person name="Burtis K.C."/>
            <person name="Busam D.A."/>
            <person name="Butler H."/>
            <person name="Cadieu E."/>
            <person name="Center A."/>
            <person name="Chandra I."/>
            <person name="Cherry J.M."/>
            <person name="Cawley S."/>
            <person name="Dahlke C."/>
            <person name="Davenport L.B."/>
            <person name="Davies P."/>
            <person name="de Pablos B."/>
            <person name="Delcher A."/>
            <person name="Deng Z."/>
            <person name="Mays A.D."/>
            <person name="Dew I."/>
            <person name="Dietz S.M."/>
            <person name="Dodson K."/>
            <person name="Doup L.E."/>
            <person name="Downes M."/>
            <person name="Dugan-Rocha S."/>
            <person name="Dunkov B.C."/>
            <person name="Dunn P."/>
            <person name="Durbin K.J."/>
            <person name="Evangelista C.C."/>
            <person name="Ferraz C."/>
            <person name="Ferriera S."/>
            <person name="Fleischmann W."/>
            <person name="Fosler C."/>
            <person name="Gabrielian A.E."/>
            <person name="Garg N.S."/>
            <person name="Gelbart W.M."/>
            <person name="Glasser K."/>
            <person name="Glodek A."/>
            <person name="Gong F."/>
            <person name="Gorrell J.H."/>
            <person name="Gu Z."/>
            <person name="Guan P."/>
            <person name="Harris M."/>
            <person name="Harris N.L."/>
            <person name="Harvey D.A."/>
            <person name="Heiman T.J."/>
            <person name="Hernandez J.R."/>
            <person name="Houck J."/>
            <person name="Hostin D."/>
            <person name="Houston K.A."/>
            <person name="Howland T.J."/>
            <person name="Wei M.-H."/>
            <person name="Ibegwam C."/>
            <person name="Jalali M."/>
            <person name="Kalush F."/>
            <person name="Karpen G.H."/>
            <person name="Ke Z."/>
            <person name="Kennison J.A."/>
            <person name="Ketchum K.A."/>
            <person name="Kimmel B.E."/>
            <person name="Kodira C.D."/>
            <person name="Kraft C.L."/>
            <person name="Kravitz S."/>
            <person name="Kulp D."/>
            <person name="Lai Z."/>
            <person name="Lasko P."/>
            <person name="Lei Y."/>
            <person name="Levitsky A.A."/>
            <person name="Li J.H."/>
            <person name="Li Z."/>
            <person name="Liang Y."/>
            <person name="Lin X."/>
            <person name="Liu X."/>
            <person name="Mattei B."/>
            <person name="McIntosh T.C."/>
            <person name="McLeod M.P."/>
            <person name="McPherson D."/>
            <person name="Merkulov G."/>
            <person name="Milshina N.V."/>
            <person name="Mobarry C."/>
            <person name="Morris J."/>
            <person name="Moshrefi A."/>
            <person name="Mount S.M."/>
            <person name="Moy M."/>
            <person name="Murphy B."/>
            <person name="Murphy L."/>
            <person name="Muzny D.M."/>
            <person name="Nelson D.L."/>
            <person name="Nelson D.R."/>
            <person name="Nelson K.A."/>
            <person name="Nixon K."/>
            <person name="Nusskern D.R."/>
            <person name="Pacleb J.M."/>
            <person name="Palazzolo M."/>
            <person name="Pittman G.S."/>
            <person name="Pan S."/>
            <person name="Pollard J."/>
            <person name="Puri V."/>
            <person name="Reese M.G."/>
            <person name="Reinert K."/>
            <person name="Remington K."/>
            <person name="Saunders R.D.C."/>
            <person name="Scheeler F."/>
            <person name="Shen H."/>
            <person name="Shue B.C."/>
            <person name="Siden-Kiamos I."/>
            <person name="Simpson M."/>
            <person name="Skupski M.P."/>
            <person name="Smith T.J."/>
            <person name="Spier E."/>
            <person name="Spradling A.C."/>
            <person name="Stapleton M."/>
            <person name="Strong R."/>
            <person name="Sun E."/>
            <person name="Svirskas R."/>
            <person name="Tector C."/>
            <person name="Turner R."/>
            <person name="Venter E."/>
            <person name="Wang A.H."/>
            <person name="Wang X."/>
            <person name="Wang Z.-Y."/>
            <person name="Wassarman D.A."/>
            <person name="Weinstock G.M."/>
            <person name="Weissenbach J."/>
            <person name="Williams S.M."/>
            <person name="Woodage T."/>
            <person name="Worley K.C."/>
            <person name="Wu D."/>
            <person name="Yang S."/>
            <person name="Yao Q.A."/>
            <person name="Ye J."/>
            <person name="Yeh R.-F."/>
            <person name="Zaveri J.S."/>
            <person name="Zhan M."/>
            <person name="Zhang G."/>
            <person name="Zhao Q."/>
            <person name="Zheng L."/>
            <person name="Zheng X.H."/>
            <person name="Zhong F.N."/>
            <person name="Zhong W."/>
            <person name="Zhou X."/>
            <person name="Zhu S.C."/>
            <person name="Zhu X."/>
            <person name="Smith H.O."/>
            <person name="Gibbs R.A."/>
            <person name="Myers E.W."/>
            <person name="Rubin G.M."/>
            <person name="Venter J.C."/>
        </authorList>
    </citation>
    <scope>NUCLEOTIDE SEQUENCE [LARGE SCALE GENOMIC DNA]</scope>
    <source>
        <strain>Berkeley</strain>
    </source>
</reference>
<reference key="2">
    <citation type="journal article" date="2002" name="Genome Biol.">
        <title>Annotation of the Drosophila melanogaster euchromatic genome: a systematic review.</title>
        <authorList>
            <person name="Misra S."/>
            <person name="Crosby M.A."/>
            <person name="Mungall C.J."/>
            <person name="Matthews B.B."/>
            <person name="Campbell K.S."/>
            <person name="Hradecky P."/>
            <person name="Huang Y."/>
            <person name="Kaminker J.S."/>
            <person name="Millburn G.H."/>
            <person name="Prochnik S.E."/>
            <person name="Smith C.D."/>
            <person name="Tupy J.L."/>
            <person name="Whitfield E.J."/>
            <person name="Bayraktaroglu L."/>
            <person name="Berman B.P."/>
            <person name="Bettencourt B.R."/>
            <person name="Celniker S.E."/>
            <person name="de Grey A.D.N.J."/>
            <person name="Drysdale R.A."/>
            <person name="Harris N.L."/>
            <person name="Richter J."/>
            <person name="Russo S."/>
            <person name="Schroeder A.J."/>
            <person name="Shu S.Q."/>
            <person name="Stapleton M."/>
            <person name="Yamada C."/>
            <person name="Ashburner M."/>
            <person name="Gelbart W.M."/>
            <person name="Rubin G.M."/>
            <person name="Lewis S.E."/>
        </authorList>
    </citation>
    <scope>GENOME REANNOTATION</scope>
    <source>
        <strain>Berkeley</strain>
    </source>
</reference>
<reference key="3">
    <citation type="submission" date="2003-01" db="EMBL/GenBank/DDBJ databases">
        <authorList>
            <person name="Stapleton M."/>
            <person name="Brokstein P."/>
            <person name="Hong L."/>
            <person name="Agbayani A."/>
            <person name="Carlson J.W."/>
            <person name="Champe M."/>
            <person name="Chavez C."/>
            <person name="Dorsett V."/>
            <person name="Dresnek D."/>
            <person name="Farfan D."/>
            <person name="Frise E."/>
            <person name="George R.A."/>
            <person name="Gonzalez M."/>
            <person name="Guarin H."/>
            <person name="Kronmiller B."/>
            <person name="Li P.W."/>
            <person name="Liao G."/>
            <person name="Miranda A."/>
            <person name="Mungall C.J."/>
            <person name="Nunoo J."/>
            <person name="Pacleb J.M."/>
            <person name="Paragas V."/>
            <person name="Park S."/>
            <person name="Patel S."/>
            <person name="Phouanenavong S."/>
            <person name="Wan K.H."/>
            <person name="Yu C."/>
            <person name="Lewis S.E."/>
            <person name="Rubin G.M."/>
            <person name="Celniker S.E."/>
        </authorList>
    </citation>
    <scope>NUCLEOTIDE SEQUENCE [LARGE SCALE MRNA]</scope>
    <source>
        <strain>Berkeley</strain>
        <tissue>Head</tissue>
    </source>
</reference>
<reference key="4">
    <citation type="journal article" date="2007" name="Mol. Biosyst.">
        <title>An integrated chemical, mass spectrometric and computational strategy for (quantitative) phosphoproteomics: application to Drosophila melanogaster Kc167 cells.</title>
        <authorList>
            <person name="Bodenmiller B."/>
            <person name="Mueller L.N."/>
            <person name="Pedrioli P.G.A."/>
            <person name="Pflieger D."/>
            <person name="Juenger M.A."/>
            <person name="Eng J.K."/>
            <person name="Aebersold R."/>
            <person name="Tao W.A."/>
        </authorList>
    </citation>
    <scope>PHOSPHORYLATION [LARGE SCALE ANALYSIS] AT SER-1213 AND SER-1683</scope>
    <scope>IDENTIFICATION BY MASS SPECTROMETRY</scope>
</reference>
<reference key="5">
    <citation type="journal article" date="2008" name="J. Proteome Res.">
        <title>Phosphoproteome analysis of Drosophila melanogaster embryos.</title>
        <authorList>
            <person name="Zhai B."/>
            <person name="Villen J."/>
            <person name="Beausoleil S.A."/>
            <person name="Mintseris J."/>
            <person name="Gygi S.P."/>
        </authorList>
    </citation>
    <scope>PHOSPHORYLATION [LARGE SCALE ANALYSIS] AT SER-1683; THR-1691 AND SER-1692</scope>
    <scope>IDENTIFICATION BY MASS SPECTROMETRY</scope>
    <source>
        <tissue>Embryo</tissue>
    </source>
</reference>
<name>ECM29_DROME</name>